<feature type="chain" id="PRO_0000409682" description="Protein YIM1">
    <location>
        <begin position="1"/>
        <end position="365"/>
    </location>
</feature>
<reference key="1">
    <citation type="journal article" date="2008" name="FEMS Yeast Res.">
        <title>Comparative genome analysis of a Saccharomyces cerevisiae wine strain.</title>
        <authorList>
            <person name="Borneman A.R."/>
            <person name="Forgan A.H."/>
            <person name="Pretorius I.S."/>
            <person name="Chambers P.J."/>
        </authorList>
    </citation>
    <scope>NUCLEOTIDE SEQUENCE [LARGE SCALE GENOMIC DNA]</scope>
    <source>
        <strain>AWRI1631</strain>
    </source>
</reference>
<organism>
    <name type="scientific">Saccharomyces cerevisiae (strain AWRI1631)</name>
    <name type="common">Baker's yeast</name>
    <dbReference type="NCBI Taxonomy" id="545124"/>
    <lineage>
        <taxon>Eukaryota</taxon>
        <taxon>Fungi</taxon>
        <taxon>Dikarya</taxon>
        <taxon>Ascomycota</taxon>
        <taxon>Saccharomycotina</taxon>
        <taxon>Saccharomycetes</taxon>
        <taxon>Saccharomycetales</taxon>
        <taxon>Saccharomycetaceae</taxon>
        <taxon>Saccharomyces</taxon>
    </lineage>
</organism>
<protein>
    <recommendedName>
        <fullName>Protein YIM1</fullName>
    </recommendedName>
</protein>
<evidence type="ECO:0000250" key="1"/>
<evidence type="ECO:0000305" key="2"/>
<dbReference type="EMBL" id="ABSV01001846">
    <property type="protein sequence ID" value="EDZ70069.1"/>
    <property type="molecule type" value="Genomic_DNA"/>
</dbReference>
<dbReference type="SMR" id="B5VPS4"/>
<dbReference type="Proteomes" id="UP000008988">
    <property type="component" value="Unassembled WGS sequence"/>
</dbReference>
<dbReference type="GO" id="GO:0005811">
    <property type="term" value="C:lipid droplet"/>
    <property type="evidence" value="ECO:0007669"/>
    <property type="project" value="UniProtKB-SubCell"/>
</dbReference>
<dbReference type="GO" id="GO:0005739">
    <property type="term" value="C:mitochondrion"/>
    <property type="evidence" value="ECO:0007669"/>
    <property type="project" value="UniProtKB-SubCell"/>
</dbReference>
<dbReference type="CDD" id="cd08247">
    <property type="entry name" value="AST1_like"/>
    <property type="match status" value="1"/>
</dbReference>
<dbReference type="Gene3D" id="3.90.180.10">
    <property type="entry name" value="Medium-chain alcohol dehydrogenases, catalytic domain"/>
    <property type="match status" value="1"/>
</dbReference>
<dbReference type="Gene3D" id="3.40.50.720">
    <property type="entry name" value="NAD(P)-binding Rossmann-like Domain"/>
    <property type="match status" value="1"/>
</dbReference>
<dbReference type="InterPro" id="IPR013154">
    <property type="entry name" value="ADH-like_N"/>
</dbReference>
<dbReference type="InterPro" id="IPR011032">
    <property type="entry name" value="GroES-like_sf"/>
</dbReference>
<dbReference type="InterPro" id="IPR036291">
    <property type="entry name" value="NAD(P)-bd_dom_sf"/>
</dbReference>
<dbReference type="InterPro" id="IPR050700">
    <property type="entry name" value="YIM1/Zinc_Alcohol_DH_Fams"/>
</dbReference>
<dbReference type="PANTHER" id="PTHR11695">
    <property type="entry name" value="ALCOHOL DEHYDROGENASE RELATED"/>
    <property type="match status" value="1"/>
</dbReference>
<dbReference type="PANTHER" id="PTHR11695:SF294">
    <property type="entry name" value="RETICULON-4-INTERACTING PROTEIN 1, MITOCHONDRIAL"/>
    <property type="match status" value="1"/>
</dbReference>
<dbReference type="Pfam" id="PF08240">
    <property type="entry name" value="ADH_N"/>
    <property type="match status" value="1"/>
</dbReference>
<dbReference type="Pfam" id="PF13602">
    <property type="entry name" value="ADH_zinc_N_2"/>
    <property type="match status" value="1"/>
</dbReference>
<dbReference type="SUPFAM" id="SSF50129">
    <property type="entry name" value="GroES-like"/>
    <property type="match status" value="1"/>
</dbReference>
<dbReference type="SUPFAM" id="SSF51735">
    <property type="entry name" value="NAD(P)-binding Rossmann-fold domains"/>
    <property type="match status" value="1"/>
</dbReference>
<keyword id="KW-0551">Lipid droplet</keyword>
<keyword id="KW-0496">Mitochondrion</keyword>
<proteinExistence type="inferred from homology"/>
<name>YIM1_YEAS6</name>
<comment type="subcellular location">
    <subcellularLocation>
        <location evidence="1">Lipid droplet</location>
    </subcellularLocation>
    <subcellularLocation>
        <location evidence="1">Mitochondrion</location>
    </subcellularLocation>
</comment>
<comment type="similarity">
    <text evidence="2">Belongs to the YIM1 family.</text>
</comment>
<gene>
    <name type="primary">YIM1</name>
    <name type="ORF">AWRI1631_132910</name>
</gene>
<accession>B5VPS4</accession>
<sequence length="365" mass="41676">MSDEIVTNKSVTYVNNTTPVTITSSELDLRSCYQDDEVVIEVHAAALNPIDFITHQLCNSYIFGKYPKTYSRDYSGVIIKAGKDVDNRWKVGDKVNGMYSHIYGERGTLTHYLILNPAKDIPITHMVEVPKDENDPYDDFVYAAAWPLTFGTAFSTLYDFKKDWTSDSKVLVIGASTSVSYAFVHIAKNYFNIGTVVGICSKNSIERNKKLGYDYLVPYDEGSIVENVKKLKQIVLENDKFDMIFDSVGNHDFFPVIDQFLKPKAKNSFYVTIAGNNKANYKNISWRDFVSLSSILKAINPFKKYNWRFGHPYPPNNFIEVGNEMIKKGTYKPPIDSVYEFDQYKEAIDRLMSNRAKGKVVVKMK</sequence>